<organism>
    <name type="scientific">Synechocystis sp. (strain ATCC 27184 / PCC 6803 / Kazusa)</name>
    <dbReference type="NCBI Taxonomy" id="1111708"/>
    <lineage>
        <taxon>Bacteria</taxon>
        <taxon>Bacillati</taxon>
        <taxon>Cyanobacteriota</taxon>
        <taxon>Cyanophyceae</taxon>
        <taxon>Synechococcales</taxon>
        <taxon>Merismopediaceae</taxon>
        <taxon>Synechocystis</taxon>
    </lineage>
</organism>
<protein>
    <recommendedName>
        <fullName evidence="1">Ribosome-binding factor A</fullName>
    </recommendedName>
</protein>
<feature type="initiator methionine" description="Removed" evidence="2">
    <location>
        <position position="1"/>
    </location>
</feature>
<feature type="chain" id="PRO_0000102757" description="Ribosome-binding factor A">
    <location>
        <begin position="2"/>
        <end position="133"/>
    </location>
</feature>
<accession>Q55625</accession>
<comment type="function">
    <text evidence="1">One of several proteins that assist in the late maturation steps of the functional core of the 30S ribosomal subunit. Associates with free 30S ribosomal subunits (but not with 30S subunits that are part of 70S ribosomes or polysomes). Required for efficient processing of 16S rRNA. May interact with the 5'-terminal helix region of 16S rRNA.</text>
</comment>
<comment type="subunit">
    <text evidence="1">Monomer. Binds 30S ribosomal subunits, but not 50S ribosomal subunits or 70S ribosomes.</text>
</comment>
<comment type="subcellular location">
    <subcellularLocation>
        <location evidence="1">Cytoplasm</location>
    </subcellularLocation>
</comment>
<comment type="similarity">
    <text evidence="1">Belongs to the RbfA family.</text>
</comment>
<sequence length="133" mass="14749">MATSRRVSRVSSLIKREVSQMLLHEIKDDRVGTGMVSVTEVEVSGDLQHAKIFVSIYGSPEAKASTMAGLHSAAPFVRRELGQRMRLRRTPEVSFLEDRSLERGDKILNLLNNLPQAIATEDLEDDDSGLALD</sequence>
<reference key="1">
    <citation type="journal article" date="1995" name="DNA Res.">
        <title>Sequence analysis of the genome of the unicellular cyanobacterium Synechocystis sp. strain PCC6803. I. Sequence features in the 1 Mb region from map positions 64% to 92% of the genome.</title>
        <authorList>
            <person name="Kaneko T."/>
            <person name="Tanaka A."/>
            <person name="Sato S."/>
            <person name="Kotani H."/>
            <person name="Sazuka T."/>
            <person name="Miyajima N."/>
            <person name="Sugiura M."/>
            <person name="Tabata S."/>
        </authorList>
    </citation>
    <scope>NUCLEOTIDE SEQUENCE [LARGE SCALE GENOMIC DNA]</scope>
    <source>
        <strain>ATCC 27184 / PCC 6803 / N-1</strain>
    </source>
</reference>
<reference key="2">
    <citation type="journal article" date="1996" name="DNA Res.">
        <title>Sequence analysis of the genome of the unicellular cyanobacterium Synechocystis sp. strain PCC6803. II. Sequence determination of the entire genome and assignment of potential protein-coding regions.</title>
        <authorList>
            <person name="Kaneko T."/>
            <person name="Sato S."/>
            <person name="Kotani H."/>
            <person name="Tanaka A."/>
            <person name="Asamizu E."/>
            <person name="Nakamura Y."/>
            <person name="Miyajima N."/>
            <person name="Hirosawa M."/>
            <person name="Sugiura M."/>
            <person name="Sasamoto S."/>
            <person name="Kimura T."/>
            <person name="Hosouchi T."/>
            <person name="Matsuno A."/>
            <person name="Muraki A."/>
            <person name="Nakazaki N."/>
            <person name="Naruo K."/>
            <person name="Okumura S."/>
            <person name="Shimpo S."/>
            <person name="Takeuchi C."/>
            <person name="Wada T."/>
            <person name="Watanabe A."/>
            <person name="Yamada M."/>
            <person name="Yasuda M."/>
            <person name="Tabata S."/>
        </authorList>
    </citation>
    <scope>NUCLEOTIDE SEQUENCE [LARGE SCALE GENOMIC DNA]</scope>
    <source>
        <strain>ATCC 27184 / PCC 6803 / Kazusa</strain>
    </source>
</reference>
<reference key="3">
    <citation type="journal article" date="1997" name="Electrophoresis">
        <title>Towards a proteome project of cyanobacterium Synechocystis sp. strain PCC6803: linking 130 protein spots with their respective genes.</title>
        <authorList>
            <person name="Sazuka T."/>
            <person name="Ohara O."/>
        </authorList>
    </citation>
    <scope>PROTEIN SEQUENCE OF 2-18</scope>
</reference>
<dbReference type="EMBL" id="BA000022">
    <property type="protein sequence ID" value="BAA10137.1"/>
    <property type="molecule type" value="Genomic_DNA"/>
</dbReference>
<dbReference type="PIR" id="S76285">
    <property type="entry name" value="S76285"/>
</dbReference>
<dbReference type="SMR" id="Q55625"/>
<dbReference type="FunCoup" id="Q55625">
    <property type="interactions" value="411"/>
</dbReference>
<dbReference type="IntAct" id="Q55625">
    <property type="interactions" value="10"/>
</dbReference>
<dbReference type="STRING" id="1148.gene:10499630"/>
<dbReference type="PaxDb" id="1148-1001511"/>
<dbReference type="EnsemblBacteria" id="BAA10137">
    <property type="protein sequence ID" value="BAA10137"/>
    <property type="gene ID" value="BAA10137"/>
</dbReference>
<dbReference type="KEGG" id="syn:sll0754"/>
<dbReference type="eggNOG" id="COG0858">
    <property type="taxonomic scope" value="Bacteria"/>
</dbReference>
<dbReference type="InParanoid" id="Q55625"/>
<dbReference type="PhylomeDB" id="Q55625"/>
<dbReference type="Proteomes" id="UP000001425">
    <property type="component" value="Chromosome"/>
</dbReference>
<dbReference type="GO" id="GO:0005829">
    <property type="term" value="C:cytosol"/>
    <property type="evidence" value="ECO:0000318"/>
    <property type="project" value="GO_Central"/>
</dbReference>
<dbReference type="GO" id="GO:0043024">
    <property type="term" value="F:ribosomal small subunit binding"/>
    <property type="evidence" value="ECO:0000318"/>
    <property type="project" value="GO_Central"/>
</dbReference>
<dbReference type="GO" id="GO:0030490">
    <property type="term" value="P:maturation of SSU-rRNA"/>
    <property type="evidence" value="ECO:0007669"/>
    <property type="project" value="UniProtKB-UniRule"/>
</dbReference>
<dbReference type="GO" id="GO:0042254">
    <property type="term" value="P:ribosome biogenesis"/>
    <property type="evidence" value="ECO:0000318"/>
    <property type="project" value="GO_Central"/>
</dbReference>
<dbReference type="Gene3D" id="3.30.300.20">
    <property type="match status" value="1"/>
</dbReference>
<dbReference type="HAMAP" id="MF_00003">
    <property type="entry name" value="RbfA"/>
    <property type="match status" value="1"/>
</dbReference>
<dbReference type="InterPro" id="IPR015946">
    <property type="entry name" value="KH_dom-like_a/b"/>
</dbReference>
<dbReference type="InterPro" id="IPR000238">
    <property type="entry name" value="RbfA"/>
</dbReference>
<dbReference type="InterPro" id="IPR023799">
    <property type="entry name" value="RbfA_dom_sf"/>
</dbReference>
<dbReference type="InterPro" id="IPR020053">
    <property type="entry name" value="Ribosome-bd_factorA_CS"/>
</dbReference>
<dbReference type="NCBIfam" id="TIGR00082">
    <property type="entry name" value="rbfA"/>
    <property type="match status" value="1"/>
</dbReference>
<dbReference type="PANTHER" id="PTHR33515">
    <property type="entry name" value="RIBOSOME-BINDING FACTOR A, CHLOROPLASTIC-RELATED"/>
    <property type="match status" value="1"/>
</dbReference>
<dbReference type="PANTHER" id="PTHR33515:SF1">
    <property type="entry name" value="RIBOSOME-BINDING FACTOR A, CHLOROPLASTIC-RELATED"/>
    <property type="match status" value="1"/>
</dbReference>
<dbReference type="Pfam" id="PF02033">
    <property type="entry name" value="RBFA"/>
    <property type="match status" value="1"/>
</dbReference>
<dbReference type="SUPFAM" id="SSF89919">
    <property type="entry name" value="Ribosome-binding factor A, RbfA"/>
    <property type="match status" value="1"/>
</dbReference>
<dbReference type="PROSITE" id="PS01319">
    <property type="entry name" value="RBFA"/>
    <property type="match status" value="1"/>
</dbReference>
<keyword id="KW-0963">Cytoplasm</keyword>
<keyword id="KW-0903">Direct protein sequencing</keyword>
<keyword id="KW-1185">Reference proteome</keyword>
<keyword id="KW-0690">Ribosome biogenesis</keyword>
<proteinExistence type="evidence at protein level"/>
<name>RBFA_SYNY3</name>
<evidence type="ECO:0000255" key="1">
    <source>
        <dbReference type="HAMAP-Rule" id="MF_00003"/>
    </source>
</evidence>
<evidence type="ECO:0000269" key="2">
    <source>
    </source>
</evidence>
<gene>
    <name evidence="1" type="primary">rbfA</name>
    <name type="ordered locus">sll0754</name>
</gene>